<comment type="function">
    <text evidence="1">Catalyzes the 2-thiolation of uridine at the wobble position (U34) of tRNA, leading to the formation of s(2)U34.</text>
</comment>
<comment type="catalytic activity">
    <reaction evidence="1">
        <text>S-sulfanyl-L-cysteinyl-[protein] + uridine(34) in tRNA + AH2 + ATP = 2-thiouridine(34) in tRNA + L-cysteinyl-[protein] + A + AMP + diphosphate + H(+)</text>
        <dbReference type="Rhea" id="RHEA:47032"/>
        <dbReference type="Rhea" id="RHEA-COMP:10131"/>
        <dbReference type="Rhea" id="RHEA-COMP:11726"/>
        <dbReference type="Rhea" id="RHEA-COMP:11727"/>
        <dbReference type="Rhea" id="RHEA-COMP:11728"/>
        <dbReference type="ChEBI" id="CHEBI:13193"/>
        <dbReference type="ChEBI" id="CHEBI:15378"/>
        <dbReference type="ChEBI" id="CHEBI:17499"/>
        <dbReference type="ChEBI" id="CHEBI:29950"/>
        <dbReference type="ChEBI" id="CHEBI:30616"/>
        <dbReference type="ChEBI" id="CHEBI:33019"/>
        <dbReference type="ChEBI" id="CHEBI:61963"/>
        <dbReference type="ChEBI" id="CHEBI:65315"/>
        <dbReference type="ChEBI" id="CHEBI:87170"/>
        <dbReference type="ChEBI" id="CHEBI:456215"/>
        <dbReference type="EC" id="2.8.1.13"/>
    </reaction>
</comment>
<comment type="subcellular location">
    <subcellularLocation>
        <location evidence="1">Cytoplasm</location>
    </subcellularLocation>
</comment>
<comment type="similarity">
    <text evidence="1">Belongs to the MnmA/TRMU family.</text>
</comment>
<feature type="chain" id="PRO_0000349685" description="tRNA-specific 2-thiouridylase MnmA">
    <location>
        <begin position="1"/>
        <end position="377"/>
    </location>
</feature>
<feature type="region of interest" description="Interaction with tRNA" evidence="1">
    <location>
        <begin position="151"/>
        <end position="153"/>
    </location>
</feature>
<feature type="region of interest" description="Interaction with tRNA" evidence="1">
    <location>
        <begin position="307"/>
        <end position="308"/>
    </location>
</feature>
<feature type="active site" description="Nucleophile" evidence="1">
    <location>
        <position position="105"/>
    </location>
</feature>
<feature type="active site" description="Cysteine persulfide intermediate" evidence="1">
    <location>
        <position position="201"/>
    </location>
</feature>
<feature type="binding site" evidence="1">
    <location>
        <begin position="9"/>
        <end position="16"/>
    </location>
    <ligand>
        <name>ATP</name>
        <dbReference type="ChEBI" id="CHEBI:30616"/>
    </ligand>
</feature>
<feature type="binding site" evidence="1">
    <location>
        <position position="35"/>
    </location>
    <ligand>
        <name>ATP</name>
        <dbReference type="ChEBI" id="CHEBI:30616"/>
    </ligand>
</feature>
<feature type="binding site" evidence="1">
    <location>
        <position position="129"/>
    </location>
    <ligand>
        <name>ATP</name>
        <dbReference type="ChEBI" id="CHEBI:30616"/>
    </ligand>
</feature>
<feature type="site" description="Interaction with tRNA" evidence="1">
    <location>
        <position position="130"/>
    </location>
</feature>
<feature type="site" description="Interaction with tRNA" evidence="1">
    <location>
        <position position="339"/>
    </location>
</feature>
<feature type="disulfide bond" description="Alternate" evidence="1">
    <location>
        <begin position="105"/>
        <end position="201"/>
    </location>
</feature>
<reference key="1">
    <citation type="journal article" date="2006" name="Proc. Natl. Acad. Sci. U.S.A.">
        <title>Genome reduction in Leptospira borgpetersenii reflects limited transmission potential.</title>
        <authorList>
            <person name="Bulach D.M."/>
            <person name="Zuerner R.L."/>
            <person name="Wilson P."/>
            <person name="Seemann T."/>
            <person name="McGrath A."/>
            <person name="Cullen P.A."/>
            <person name="Davis J."/>
            <person name="Johnson M."/>
            <person name="Kuczek E."/>
            <person name="Alt D.P."/>
            <person name="Peterson-Burch B."/>
            <person name="Coppel R.L."/>
            <person name="Rood J.I."/>
            <person name="Davies J.K."/>
            <person name="Adler B."/>
        </authorList>
    </citation>
    <scope>NUCLEOTIDE SEQUENCE [LARGE SCALE GENOMIC DNA]</scope>
    <source>
        <strain>L550</strain>
    </source>
</reference>
<protein>
    <recommendedName>
        <fullName evidence="1">tRNA-specific 2-thiouridylase MnmA</fullName>
        <ecNumber evidence="1">2.8.1.13</ecNumber>
    </recommendedName>
</protein>
<sequence length="377" mass="42346">MSKGKIIVAMSGGVDSAVTAGLLMEEGYEVIGVNLRTWEYEAPVCDTTKKSCCSPEDIRDARDVGLSLKIPFYVVKMEKVFQEKVIDRFIDDYQHGKTPNPCVECNTFVKFGALFEKAKALGIDKIATGHYARIVRNGERYAISNGVDIGKNQAYYLYGLSQENLKNVTFPLGGMTKPEVREIARRMGLSVADKAESQEICFIPENDYRKFLEKKHVEFTPGFFKLRDGRIIGKHKGRENFTIGQRKGLGIAWRNPLYVIAIEDDGSVILGEENETYAESFSVIDVNYQGFAPLGEGESFECRVQVRYRHTPIRCRITKMNEDLVVNPLEEVRGVTPGQSAVFYPLNSDYLLLGGIIRKGSIRMQVAKEESAIAFRS</sequence>
<name>MNMA_LEPBL</name>
<keyword id="KW-0067">ATP-binding</keyword>
<keyword id="KW-0963">Cytoplasm</keyword>
<keyword id="KW-1015">Disulfide bond</keyword>
<keyword id="KW-0547">Nucleotide-binding</keyword>
<keyword id="KW-0694">RNA-binding</keyword>
<keyword id="KW-0808">Transferase</keyword>
<keyword id="KW-0819">tRNA processing</keyword>
<keyword id="KW-0820">tRNA-binding</keyword>
<proteinExistence type="inferred from homology"/>
<accession>Q04ZN1</accession>
<gene>
    <name evidence="1" type="primary">mnmA</name>
    <name type="ordered locus">LBL_2047</name>
</gene>
<dbReference type="EC" id="2.8.1.13" evidence="1"/>
<dbReference type="EMBL" id="CP000348">
    <property type="protein sequence ID" value="ABJ79464.1"/>
    <property type="molecule type" value="Genomic_DNA"/>
</dbReference>
<dbReference type="SMR" id="Q04ZN1"/>
<dbReference type="KEGG" id="lbl:LBL_2047"/>
<dbReference type="HOGENOM" id="CLU_035188_0_0_12"/>
<dbReference type="GO" id="GO:0005737">
    <property type="term" value="C:cytoplasm"/>
    <property type="evidence" value="ECO:0007669"/>
    <property type="project" value="UniProtKB-SubCell"/>
</dbReference>
<dbReference type="GO" id="GO:0005524">
    <property type="term" value="F:ATP binding"/>
    <property type="evidence" value="ECO:0007669"/>
    <property type="project" value="UniProtKB-KW"/>
</dbReference>
<dbReference type="GO" id="GO:0000049">
    <property type="term" value="F:tRNA binding"/>
    <property type="evidence" value="ECO:0007669"/>
    <property type="project" value="UniProtKB-KW"/>
</dbReference>
<dbReference type="GO" id="GO:0103016">
    <property type="term" value="F:tRNA-uridine 2-sulfurtransferase activity"/>
    <property type="evidence" value="ECO:0007669"/>
    <property type="project" value="UniProtKB-EC"/>
</dbReference>
<dbReference type="GO" id="GO:0002143">
    <property type="term" value="P:tRNA wobble position uridine thiolation"/>
    <property type="evidence" value="ECO:0007669"/>
    <property type="project" value="TreeGrafter"/>
</dbReference>
<dbReference type="CDD" id="cd01998">
    <property type="entry name" value="MnmA_TRMU-like"/>
    <property type="match status" value="1"/>
</dbReference>
<dbReference type="FunFam" id="3.40.50.620:FF:000115">
    <property type="entry name" value="tRNA-specific 2-thiouridylase MnmA"/>
    <property type="match status" value="1"/>
</dbReference>
<dbReference type="Gene3D" id="2.30.30.280">
    <property type="entry name" value="Adenine nucleotide alpha hydrolases-like domains"/>
    <property type="match status" value="1"/>
</dbReference>
<dbReference type="Gene3D" id="3.40.50.620">
    <property type="entry name" value="HUPs"/>
    <property type="match status" value="1"/>
</dbReference>
<dbReference type="Gene3D" id="2.40.30.10">
    <property type="entry name" value="Translation factors"/>
    <property type="match status" value="1"/>
</dbReference>
<dbReference type="HAMAP" id="MF_00144">
    <property type="entry name" value="tRNA_thiouridyl_MnmA"/>
    <property type="match status" value="1"/>
</dbReference>
<dbReference type="InterPro" id="IPR004506">
    <property type="entry name" value="MnmA-like"/>
</dbReference>
<dbReference type="InterPro" id="IPR046885">
    <property type="entry name" value="MnmA-like_C"/>
</dbReference>
<dbReference type="InterPro" id="IPR046884">
    <property type="entry name" value="MnmA-like_central"/>
</dbReference>
<dbReference type="InterPro" id="IPR023382">
    <property type="entry name" value="MnmA-like_central_sf"/>
</dbReference>
<dbReference type="InterPro" id="IPR014729">
    <property type="entry name" value="Rossmann-like_a/b/a_fold"/>
</dbReference>
<dbReference type="NCBIfam" id="NF001138">
    <property type="entry name" value="PRK00143.1"/>
    <property type="match status" value="1"/>
</dbReference>
<dbReference type="NCBIfam" id="TIGR00420">
    <property type="entry name" value="trmU"/>
    <property type="match status" value="1"/>
</dbReference>
<dbReference type="PANTHER" id="PTHR11933:SF5">
    <property type="entry name" value="MITOCHONDRIAL TRNA-SPECIFIC 2-THIOURIDYLASE 1"/>
    <property type="match status" value="1"/>
</dbReference>
<dbReference type="PANTHER" id="PTHR11933">
    <property type="entry name" value="TRNA 5-METHYLAMINOMETHYL-2-THIOURIDYLATE -METHYLTRANSFERASE"/>
    <property type="match status" value="1"/>
</dbReference>
<dbReference type="Pfam" id="PF03054">
    <property type="entry name" value="tRNA_Me_trans"/>
    <property type="match status" value="1"/>
</dbReference>
<dbReference type="Pfam" id="PF20258">
    <property type="entry name" value="tRNA_Me_trans_C"/>
    <property type="match status" value="1"/>
</dbReference>
<dbReference type="Pfam" id="PF20259">
    <property type="entry name" value="tRNA_Me_trans_M"/>
    <property type="match status" value="1"/>
</dbReference>
<dbReference type="SUPFAM" id="SSF52402">
    <property type="entry name" value="Adenine nucleotide alpha hydrolases-like"/>
    <property type="match status" value="1"/>
</dbReference>
<evidence type="ECO:0000255" key="1">
    <source>
        <dbReference type="HAMAP-Rule" id="MF_00144"/>
    </source>
</evidence>
<organism>
    <name type="scientific">Leptospira borgpetersenii serovar Hardjo-bovis (strain L550)</name>
    <dbReference type="NCBI Taxonomy" id="355276"/>
    <lineage>
        <taxon>Bacteria</taxon>
        <taxon>Pseudomonadati</taxon>
        <taxon>Spirochaetota</taxon>
        <taxon>Spirochaetia</taxon>
        <taxon>Leptospirales</taxon>
        <taxon>Leptospiraceae</taxon>
        <taxon>Leptospira</taxon>
    </lineage>
</organism>